<reference key="1">
    <citation type="submission" date="2004-12" db="EMBL/GenBank/DDBJ databases">
        <title>The genome sequence of Borrelia hermsii and Borrelia turicatae: comparative analysis of two agents of endemic N. America relapsing fever.</title>
        <authorList>
            <person name="Porcella S.F."/>
            <person name="Raffel S.J."/>
            <person name="Schrumpf M.E."/>
            <person name="Montgomery B."/>
            <person name="Smith T."/>
            <person name="Schwan T.G."/>
        </authorList>
    </citation>
    <scope>NUCLEOTIDE SEQUENCE [LARGE SCALE GENOMIC DNA]</scope>
    <source>
        <strain>91E135</strain>
    </source>
</reference>
<gene>
    <name evidence="1" type="primary">ebfC</name>
    <name type="ordered locus">BT0462</name>
</gene>
<accession>A1QZP7</accession>
<organism>
    <name type="scientific">Borrelia turicatae (strain 91E135)</name>
    <dbReference type="NCBI Taxonomy" id="314724"/>
    <lineage>
        <taxon>Bacteria</taxon>
        <taxon>Pseudomonadati</taxon>
        <taxon>Spirochaetota</taxon>
        <taxon>Spirochaetia</taxon>
        <taxon>Spirochaetales</taxon>
        <taxon>Borreliaceae</taxon>
        <taxon>Borrelia</taxon>
    </lineage>
</organism>
<feature type="chain" id="PRO_1000197643" description="Nucleoid-associated protein EbfC">
    <location>
        <begin position="1"/>
        <end position="99"/>
    </location>
</feature>
<protein>
    <recommendedName>
        <fullName evidence="1">Nucleoid-associated protein EbfC</fullName>
    </recommendedName>
</protein>
<evidence type="ECO:0000255" key="1">
    <source>
        <dbReference type="HAMAP-Rule" id="MF_00274"/>
    </source>
</evidence>
<comment type="function">
    <text evidence="1">Binds to DNA and alters its conformation. May be involved in regulation of gene expression, nucleoid organization and DNA protection.</text>
</comment>
<comment type="subunit">
    <text evidence="1">Homodimer.</text>
</comment>
<comment type="subcellular location">
    <subcellularLocation>
        <location evidence="1">Cytoplasm</location>
        <location evidence="1">Nucleoid</location>
    </subcellularLocation>
</comment>
<comment type="similarity">
    <text evidence="1">Belongs to the YbaB/EbfC family.</text>
</comment>
<keyword id="KW-0963">Cytoplasm</keyword>
<keyword id="KW-0238">DNA-binding</keyword>
<keyword id="KW-1185">Reference proteome</keyword>
<name>EBFC_BORT9</name>
<dbReference type="EMBL" id="CP000049">
    <property type="protein sequence ID" value="AAX17789.1"/>
    <property type="molecule type" value="Genomic_DNA"/>
</dbReference>
<dbReference type="RefSeq" id="WP_011772408.1">
    <property type="nucleotide sequence ID" value="NZ_CP073176.1"/>
</dbReference>
<dbReference type="SMR" id="A1QZP7"/>
<dbReference type="KEGG" id="btu:BT0462"/>
<dbReference type="eggNOG" id="COG0718">
    <property type="taxonomic scope" value="Bacteria"/>
</dbReference>
<dbReference type="HOGENOM" id="CLU_140930_4_1_12"/>
<dbReference type="Proteomes" id="UP000001205">
    <property type="component" value="Chromosome"/>
</dbReference>
<dbReference type="GO" id="GO:0043590">
    <property type="term" value="C:bacterial nucleoid"/>
    <property type="evidence" value="ECO:0007669"/>
    <property type="project" value="UniProtKB-UniRule"/>
</dbReference>
<dbReference type="GO" id="GO:0005737">
    <property type="term" value="C:cytoplasm"/>
    <property type="evidence" value="ECO:0007669"/>
    <property type="project" value="UniProtKB-UniRule"/>
</dbReference>
<dbReference type="GO" id="GO:0003677">
    <property type="term" value="F:DNA binding"/>
    <property type="evidence" value="ECO:0007669"/>
    <property type="project" value="UniProtKB-UniRule"/>
</dbReference>
<dbReference type="Gene3D" id="3.30.1310.10">
    <property type="entry name" value="Nucleoid-associated protein YbaB-like domain"/>
    <property type="match status" value="1"/>
</dbReference>
<dbReference type="HAMAP" id="MF_00274">
    <property type="entry name" value="DNA_YbaB_EbfC"/>
    <property type="match status" value="1"/>
</dbReference>
<dbReference type="InterPro" id="IPR036894">
    <property type="entry name" value="YbaB-like_sf"/>
</dbReference>
<dbReference type="InterPro" id="IPR004401">
    <property type="entry name" value="YbaB/EbfC"/>
</dbReference>
<dbReference type="NCBIfam" id="TIGR00103">
    <property type="entry name" value="DNA_YbaB_EbfC"/>
    <property type="match status" value="1"/>
</dbReference>
<dbReference type="Pfam" id="PF02575">
    <property type="entry name" value="YbaB_DNA_bd"/>
    <property type="match status" value="1"/>
</dbReference>
<dbReference type="PIRSF" id="PIRSF004555">
    <property type="entry name" value="UCP004555"/>
    <property type="match status" value="1"/>
</dbReference>
<dbReference type="SUPFAM" id="SSF82607">
    <property type="entry name" value="YbaB-like"/>
    <property type="match status" value="1"/>
</dbReference>
<sequence>MAVNPLDFLKNMSGFKDNIDNFKKEISQIVVCGRAGSDVVVVEMNGEFVVKKVVIKEEFFSDLDNEALEHMIKSAFNDAISKVKEEIKSKTMGSIPFGI</sequence>
<proteinExistence type="inferred from homology"/>